<feature type="chain" id="PRO_1000074327" description="Glutamate--tRNA ligase">
    <location>
        <begin position="1"/>
        <end position="493"/>
    </location>
</feature>
<feature type="short sequence motif" description="'HIGH' region" evidence="1">
    <location>
        <begin position="10"/>
        <end position="20"/>
    </location>
</feature>
<feature type="short sequence motif" description="'KMSKS' region" evidence="1">
    <location>
        <begin position="251"/>
        <end position="255"/>
    </location>
</feature>
<feature type="binding site" evidence="1">
    <location>
        <position position="254"/>
    </location>
    <ligand>
        <name>ATP</name>
        <dbReference type="ChEBI" id="CHEBI:30616"/>
    </ligand>
</feature>
<protein>
    <recommendedName>
        <fullName evidence="1">Glutamate--tRNA ligase</fullName>
        <ecNumber evidence="1">6.1.1.17</ecNumber>
    </recommendedName>
    <alternativeName>
        <fullName evidence="1">Glutamyl-tRNA synthetase</fullName>
        <shortName evidence="1">GluRS</shortName>
    </alternativeName>
</protein>
<gene>
    <name evidence="1" type="primary">gltX</name>
    <name type="ordered locus">PputGB1_1508</name>
</gene>
<name>SYE_PSEPG</name>
<reference key="1">
    <citation type="submission" date="2008-01" db="EMBL/GenBank/DDBJ databases">
        <title>Complete sequence of Pseudomonas putida GB-1.</title>
        <authorList>
            <consortium name="US DOE Joint Genome Institute"/>
            <person name="Copeland A."/>
            <person name="Lucas S."/>
            <person name="Lapidus A."/>
            <person name="Barry K."/>
            <person name="Glavina del Rio T."/>
            <person name="Dalin E."/>
            <person name="Tice H."/>
            <person name="Pitluck S."/>
            <person name="Bruce D."/>
            <person name="Goodwin L."/>
            <person name="Chertkov O."/>
            <person name="Brettin T."/>
            <person name="Detter J.C."/>
            <person name="Han C."/>
            <person name="Kuske C.R."/>
            <person name="Schmutz J."/>
            <person name="Larimer F."/>
            <person name="Land M."/>
            <person name="Hauser L."/>
            <person name="Kyrpides N."/>
            <person name="Kim E."/>
            <person name="McCarthy J.K."/>
            <person name="Richardson P."/>
        </authorList>
    </citation>
    <scope>NUCLEOTIDE SEQUENCE [LARGE SCALE GENOMIC DNA]</scope>
    <source>
        <strain>GB-1</strain>
    </source>
</reference>
<sequence length="493" mass="56481">MTTVRTRIAPSPTGDPHVGTAYIALFNYCFAKQHGGEFILRIEDTDQLRSTRESEQQIFDALRWLGIEWNEGPDVGGPHGPYRQSERGDIYAKYAKELVDAGHAFYCFCTAEELEQMRAEQQARGETPRYDGRALLLSAEEVQRRLDAGEPHVIRMKVPSEGICVVPDMLRGDVEIPWDRMDMQVLMKNDGLPTYFLANVVDDHLMGITHVLRGEEWLPSAPKLIKLYEYFGWEQPKLCYMPLLRNPDKSKLSKRKNPTSVTFYERMGFMPEAMLNYLGRMGWSMPDEREKFSLAEMVEHFDLSRISLGGPIFDIEKLSWLNGQWLRELPVEEFATRLQKWAFNSDYMMKIAPHVQGRVETFSQVAPLGGFFFEGALKLDAKLFESKKLSADQVRQVIQLILWKLESLRQWEKERITGCIQAVVEALELKLRDAMPLMFAAITGQASSVSVLDAMEILGPDLTRYRLRQALDLLGGVSKKENKEWEKLLASIA</sequence>
<proteinExistence type="inferred from homology"/>
<comment type="function">
    <text evidence="1">Catalyzes the attachment of glutamate to tRNA(Glu) in a two-step reaction: glutamate is first activated by ATP to form Glu-AMP and then transferred to the acceptor end of tRNA(Glu).</text>
</comment>
<comment type="catalytic activity">
    <reaction evidence="1">
        <text>tRNA(Glu) + L-glutamate + ATP = L-glutamyl-tRNA(Glu) + AMP + diphosphate</text>
        <dbReference type="Rhea" id="RHEA:23540"/>
        <dbReference type="Rhea" id="RHEA-COMP:9663"/>
        <dbReference type="Rhea" id="RHEA-COMP:9680"/>
        <dbReference type="ChEBI" id="CHEBI:29985"/>
        <dbReference type="ChEBI" id="CHEBI:30616"/>
        <dbReference type="ChEBI" id="CHEBI:33019"/>
        <dbReference type="ChEBI" id="CHEBI:78442"/>
        <dbReference type="ChEBI" id="CHEBI:78520"/>
        <dbReference type="ChEBI" id="CHEBI:456215"/>
        <dbReference type="EC" id="6.1.1.17"/>
    </reaction>
</comment>
<comment type="subunit">
    <text evidence="1">Monomer.</text>
</comment>
<comment type="subcellular location">
    <subcellularLocation>
        <location evidence="1">Cytoplasm</location>
    </subcellularLocation>
</comment>
<comment type="similarity">
    <text evidence="1">Belongs to the class-I aminoacyl-tRNA synthetase family. Glutamate--tRNA ligase type 1 subfamily.</text>
</comment>
<evidence type="ECO:0000255" key="1">
    <source>
        <dbReference type="HAMAP-Rule" id="MF_00022"/>
    </source>
</evidence>
<accession>B0KF73</accession>
<dbReference type="EC" id="6.1.1.17" evidence="1"/>
<dbReference type="EMBL" id="CP000926">
    <property type="protein sequence ID" value="ABY97413.1"/>
    <property type="molecule type" value="Genomic_DNA"/>
</dbReference>
<dbReference type="RefSeq" id="WP_012271180.1">
    <property type="nucleotide sequence ID" value="NC_010322.1"/>
</dbReference>
<dbReference type="SMR" id="B0KF73"/>
<dbReference type="KEGG" id="ppg:PputGB1_1508"/>
<dbReference type="eggNOG" id="COG0008">
    <property type="taxonomic scope" value="Bacteria"/>
</dbReference>
<dbReference type="HOGENOM" id="CLU_015768_6_3_6"/>
<dbReference type="Proteomes" id="UP000002157">
    <property type="component" value="Chromosome"/>
</dbReference>
<dbReference type="GO" id="GO:0005829">
    <property type="term" value="C:cytosol"/>
    <property type="evidence" value="ECO:0007669"/>
    <property type="project" value="TreeGrafter"/>
</dbReference>
<dbReference type="GO" id="GO:0005524">
    <property type="term" value="F:ATP binding"/>
    <property type="evidence" value="ECO:0007669"/>
    <property type="project" value="UniProtKB-UniRule"/>
</dbReference>
<dbReference type="GO" id="GO:0004818">
    <property type="term" value="F:glutamate-tRNA ligase activity"/>
    <property type="evidence" value="ECO:0007669"/>
    <property type="project" value="UniProtKB-UniRule"/>
</dbReference>
<dbReference type="GO" id="GO:0000049">
    <property type="term" value="F:tRNA binding"/>
    <property type="evidence" value="ECO:0007669"/>
    <property type="project" value="InterPro"/>
</dbReference>
<dbReference type="GO" id="GO:0008270">
    <property type="term" value="F:zinc ion binding"/>
    <property type="evidence" value="ECO:0007669"/>
    <property type="project" value="InterPro"/>
</dbReference>
<dbReference type="GO" id="GO:0006424">
    <property type="term" value="P:glutamyl-tRNA aminoacylation"/>
    <property type="evidence" value="ECO:0007669"/>
    <property type="project" value="UniProtKB-UniRule"/>
</dbReference>
<dbReference type="CDD" id="cd00808">
    <property type="entry name" value="GluRS_core"/>
    <property type="match status" value="1"/>
</dbReference>
<dbReference type="FunFam" id="1.10.10.350:FF:000007">
    <property type="entry name" value="Glutamate--tRNA ligase"/>
    <property type="match status" value="1"/>
</dbReference>
<dbReference type="FunFam" id="3.40.50.620:FF:000045">
    <property type="entry name" value="Glutamate--tRNA ligase, mitochondrial"/>
    <property type="match status" value="1"/>
</dbReference>
<dbReference type="Gene3D" id="1.10.10.350">
    <property type="match status" value="1"/>
</dbReference>
<dbReference type="Gene3D" id="3.40.50.620">
    <property type="entry name" value="HUPs"/>
    <property type="match status" value="1"/>
</dbReference>
<dbReference type="HAMAP" id="MF_00022">
    <property type="entry name" value="Glu_tRNA_synth_type1"/>
    <property type="match status" value="1"/>
</dbReference>
<dbReference type="InterPro" id="IPR045462">
    <property type="entry name" value="aa-tRNA-synth_I_cd-bd"/>
</dbReference>
<dbReference type="InterPro" id="IPR020751">
    <property type="entry name" value="aa-tRNA-synth_I_codon-bd_sub2"/>
</dbReference>
<dbReference type="InterPro" id="IPR001412">
    <property type="entry name" value="aa-tRNA-synth_I_CS"/>
</dbReference>
<dbReference type="InterPro" id="IPR008925">
    <property type="entry name" value="aa_tRNA-synth_I_cd-bd_sf"/>
</dbReference>
<dbReference type="InterPro" id="IPR004527">
    <property type="entry name" value="Glu-tRNA-ligase_bac/mito"/>
</dbReference>
<dbReference type="InterPro" id="IPR000924">
    <property type="entry name" value="Glu/Gln-tRNA-synth"/>
</dbReference>
<dbReference type="InterPro" id="IPR020058">
    <property type="entry name" value="Glu/Gln-tRNA-synth_Ib_cat-dom"/>
</dbReference>
<dbReference type="InterPro" id="IPR049940">
    <property type="entry name" value="GluQ/Sye"/>
</dbReference>
<dbReference type="InterPro" id="IPR033910">
    <property type="entry name" value="GluRS_core"/>
</dbReference>
<dbReference type="InterPro" id="IPR014729">
    <property type="entry name" value="Rossmann-like_a/b/a_fold"/>
</dbReference>
<dbReference type="NCBIfam" id="TIGR00464">
    <property type="entry name" value="gltX_bact"/>
    <property type="match status" value="1"/>
</dbReference>
<dbReference type="PANTHER" id="PTHR43311">
    <property type="entry name" value="GLUTAMATE--TRNA LIGASE"/>
    <property type="match status" value="1"/>
</dbReference>
<dbReference type="PANTHER" id="PTHR43311:SF2">
    <property type="entry name" value="GLUTAMATE--TRNA LIGASE, MITOCHONDRIAL-RELATED"/>
    <property type="match status" value="1"/>
</dbReference>
<dbReference type="Pfam" id="PF19269">
    <property type="entry name" value="Anticodon_2"/>
    <property type="match status" value="1"/>
</dbReference>
<dbReference type="Pfam" id="PF00749">
    <property type="entry name" value="tRNA-synt_1c"/>
    <property type="match status" value="1"/>
</dbReference>
<dbReference type="PRINTS" id="PR00987">
    <property type="entry name" value="TRNASYNTHGLU"/>
</dbReference>
<dbReference type="SUPFAM" id="SSF48163">
    <property type="entry name" value="An anticodon-binding domain of class I aminoacyl-tRNA synthetases"/>
    <property type="match status" value="1"/>
</dbReference>
<dbReference type="SUPFAM" id="SSF52374">
    <property type="entry name" value="Nucleotidylyl transferase"/>
    <property type="match status" value="1"/>
</dbReference>
<dbReference type="PROSITE" id="PS00178">
    <property type="entry name" value="AA_TRNA_LIGASE_I"/>
    <property type="match status" value="1"/>
</dbReference>
<keyword id="KW-0030">Aminoacyl-tRNA synthetase</keyword>
<keyword id="KW-0067">ATP-binding</keyword>
<keyword id="KW-0963">Cytoplasm</keyword>
<keyword id="KW-0436">Ligase</keyword>
<keyword id="KW-0547">Nucleotide-binding</keyword>
<keyword id="KW-0648">Protein biosynthesis</keyword>
<organism>
    <name type="scientific">Pseudomonas putida (strain GB-1)</name>
    <dbReference type="NCBI Taxonomy" id="76869"/>
    <lineage>
        <taxon>Bacteria</taxon>
        <taxon>Pseudomonadati</taxon>
        <taxon>Pseudomonadota</taxon>
        <taxon>Gammaproteobacteria</taxon>
        <taxon>Pseudomonadales</taxon>
        <taxon>Pseudomonadaceae</taxon>
        <taxon>Pseudomonas</taxon>
    </lineage>
</organism>